<organism>
    <name type="scientific">Methanoculleus marisnigri (strain ATCC 35101 / DSM 1498 / JR1)</name>
    <dbReference type="NCBI Taxonomy" id="368407"/>
    <lineage>
        <taxon>Archaea</taxon>
        <taxon>Methanobacteriati</taxon>
        <taxon>Methanobacteriota</taxon>
        <taxon>Stenosarchaea group</taxon>
        <taxon>Methanomicrobia</taxon>
        <taxon>Methanomicrobiales</taxon>
        <taxon>Methanomicrobiaceae</taxon>
        <taxon>Methanoculleus</taxon>
    </lineage>
</organism>
<sequence>MADTTRKSGSRRLARERIAVLFARAAEFYPESPDRSNRCVELARKIGMRHRIRIERPLKRRFCRRCYTYLVPGSNARVRVHRGRVVVTCLACGHRSRFPVGRPRQ</sequence>
<evidence type="ECO:0000255" key="1">
    <source>
        <dbReference type="HAMAP-Rule" id="MF_00757"/>
    </source>
</evidence>
<gene>
    <name evidence="1" type="primary">rnp4</name>
    <name type="ordered locus">Memar_1975</name>
</gene>
<keyword id="KW-0963">Cytoplasm</keyword>
<keyword id="KW-0255">Endonuclease</keyword>
<keyword id="KW-0378">Hydrolase</keyword>
<keyword id="KW-0479">Metal-binding</keyword>
<keyword id="KW-0540">Nuclease</keyword>
<keyword id="KW-0819">tRNA processing</keyword>
<keyword id="KW-0862">Zinc</keyword>
<protein>
    <recommendedName>
        <fullName evidence="1">Ribonuclease P protein component 4</fullName>
        <shortName evidence="1">RNase P component 4</shortName>
        <ecNumber evidence="1">3.1.26.5</ecNumber>
    </recommendedName>
    <alternativeName>
        <fullName evidence="1">Rpp21</fullName>
    </alternativeName>
</protein>
<name>RNP4_METMJ</name>
<dbReference type="EC" id="3.1.26.5" evidence="1"/>
<dbReference type="EMBL" id="CP000562">
    <property type="protein sequence ID" value="ABN57901.1"/>
    <property type="molecule type" value="Genomic_DNA"/>
</dbReference>
<dbReference type="RefSeq" id="WP_011844810.1">
    <property type="nucleotide sequence ID" value="NC_009051.1"/>
</dbReference>
<dbReference type="SMR" id="A3CX01"/>
<dbReference type="STRING" id="368407.Memar_1975"/>
<dbReference type="GeneID" id="4847390"/>
<dbReference type="KEGG" id="mem:Memar_1975"/>
<dbReference type="eggNOG" id="arCOG04345">
    <property type="taxonomic scope" value="Archaea"/>
</dbReference>
<dbReference type="HOGENOM" id="CLU_079140_3_1_2"/>
<dbReference type="OrthoDB" id="10058at2157"/>
<dbReference type="Proteomes" id="UP000002146">
    <property type="component" value="Chromosome"/>
</dbReference>
<dbReference type="GO" id="GO:0005737">
    <property type="term" value="C:cytoplasm"/>
    <property type="evidence" value="ECO:0007669"/>
    <property type="project" value="UniProtKB-SubCell"/>
</dbReference>
<dbReference type="GO" id="GO:0030677">
    <property type="term" value="C:ribonuclease P complex"/>
    <property type="evidence" value="ECO:0007669"/>
    <property type="project" value="UniProtKB-UniRule"/>
</dbReference>
<dbReference type="GO" id="GO:0004526">
    <property type="term" value="F:ribonuclease P activity"/>
    <property type="evidence" value="ECO:0007669"/>
    <property type="project" value="UniProtKB-UniRule"/>
</dbReference>
<dbReference type="GO" id="GO:0008270">
    <property type="term" value="F:zinc ion binding"/>
    <property type="evidence" value="ECO:0007669"/>
    <property type="project" value="UniProtKB-UniRule"/>
</dbReference>
<dbReference type="GO" id="GO:0001682">
    <property type="term" value="P:tRNA 5'-leader removal"/>
    <property type="evidence" value="ECO:0007669"/>
    <property type="project" value="UniProtKB-UniRule"/>
</dbReference>
<dbReference type="Gene3D" id="6.20.50.20">
    <property type="match status" value="1"/>
</dbReference>
<dbReference type="Gene3D" id="1.20.5.420">
    <property type="entry name" value="Immunoglobulin FC, subunit C"/>
    <property type="match status" value="1"/>
</dbReference>
<dbReference type="HAMAP" id="MF_00757">
    <property type="entry name" value="RNase_P_4"/>
    <property type="match status" value="1"/>
</dbReference>
<dbReference type="InterPro" id="IPR016432">
    <property type="entry name" value="RNP4"/>
</dbReference>
<dbReference type="InterPro" id="IPR007175">
    <property type="entry name" value="Rpr2/Snm1/Rpp21"/>
</dbReference>
<dbReference type="PANTHER" id="PTHR14742:SF0">
    <property type="entry name" value="RIBONUCLEASE P PROTEIN SUBUNIT P21"/>
    <property type="match status" value="1"/>
</dbReference>
<dbReference type="PANTHER" id="PTHR14742">
    <property type="entry name" value="RIBONUCLEASE P SUBUNIT P21"/>
    <property type="match status" value="1"/>
</dbReference>
<dbReference type="Pfam" id="PF04032">
    <property type="entry name" value="Rpr2"/>
    <property type="match status" value="1"/>
</dbReference>
<dbReference type="PIRSF" id="PIRSF004878">
    <property type="entry name" value="RNase_P_4"/>
    <property type="match status" value="1"/>
</dbReference>
<feature type="chain" id="PRO_1000083505" description="Ribonuclease P protein component 4">
    <location>
        <begin position="1"/>
        <end position="105"/>
    </location>
</feature>
<feature type="binding site" evidence="1">
    <location>
        <position position="63"/>
    </location>
    <ligand>
        <name>Zn(2+)</name>
        <dbReference type="ChEBI" id="CHEBI:29105"/>
    </ligand>
</feature>
<feature type="binding site" evidence="1">
    <location>
        <position position="66"/>
    </location>
    <ligand>
        <name>Zn(2+)</name>
        <dbReference type="ChEBI" id="CHEBI:29105"/>
    </ligand>
</feature>
<feature type="binding site" evidence="1">
    <location>
        <position position="89"/>
    </location>
    <ligand>
        <name>Zn(2+)</name>
        <dbReference type="ChEBI" id="CHEBI:29105"/>
    </ligand>
</feature>
<feature type="binding site" evidence="1">
    <location>
        <position position="92"/>
    </location>
    <ligand>
        <name>Zn(2+)</name>
        <dbReference type="ChEBI" id="CHEBI:29105"/>
    </ligand>
</feature>
<comment type="function">
    <text evidence="1">Part of ribonuclease P, a protein complex that generates mature tRNA molecules by cleaving their 5'-ends.</text>
</comment>
<comment type="catalytic activity">
    <reaction evidence="1">
        <text>Endonucleolytic cleavage of RNA, removing 5'-extranucleotides from tRNA precursor.</text>
        <dbReference type="EC" id="3.1.26.5"/>
    </reaction>
</comment>
<comment type="cofactor">
    <cofactor evidence="1">
        <name>Zn(2+)</name>
        <dbReference type="ChEBI" id="CHEBI:29105"/>
    </cofactor>
    <text evidence="1">Binds 1 zinc ion per subunit.</text>
</comment>
<comment type="subunit">
    <text evidence="1">Consists of a catalytic RNA component and at least 4-5 protein subunits.</text>
</comment>
<comment type="subcellular location">
    <subcellularLocation>
        <location evidence="1">Cytoplasm</location>
    </subcellularLocation>
</comment>
<comment type="similarity">
    <text evidence="1">Belongs to the eukaryotic/archaeal RNase P protein component 4 family.</text>
</comment>
<accession>A3CX01</accession>
<proteinExistence type="inferred from homology"/>
<reference key="1">
    <citation type="journal article" date="2009" name="Stand. Genomic Sci.">
        <title>Complete genome sequence of Methanoculleus marisnigri Romesser et al. 1981 type strain JR1.</title>
        <authorList>
            <person name="Anderson I.J."/>
            <person name="Sieprawska-Lupa M."/>
            <person name="Lapidus A."/>
            <person name="Nolan M."/>
            <person name="Copeland A."/>
            <person name="Glavina Del Rio T."/>
            <person name="Tice H."/>
            <person name="Dalin E."/>
            <person name="Barry K."/>
            <person name="Saunders E."/>
            <person name="Han C."/>
            <person name="Brettin T."/>
            <person name="Detter J.C."/>
            <person name="Bruce D."/>
            <person name="Mikhailova N."/>
            <person name="Pitluck S."/>
            <person name="Hauser L."/>
            <person name="Land M."/>
            <person name="Lucas S."/>
            <person name="Richardson P."/>
            <person name="Whitman W.B."/>
            <person name="Kyrpides N.C."/>
        </authorList>
    </citation>
    <scope>NUCLEOTIDE SEQUENCE [LARGE SCALE GENOMIC DNA]</scope>
    <source>
        <strain>ATCC 35101 / DSM 1498 / JR1</strain>
    </source>
</reference>